<gene>
    <name type="ordered locus">BA_3420</name>
    <name type="ordered locus">GBAA_3420</name>
    <name type="ordered locus">BAS3170</name>
</gene>
<organism>
    <name type="scientific">Bacillus anthracis</name>
    <dbReference type="NCBI Taxonomy" id="1392"/>
    <lineage>
        <taxon>Bacteria</taxon>
        <taxon>Bacillati</taxon>
        <taxon>Bacillota</taxon>
        <taxon>Bacilli</taxon>
        <taxon>Bacillales</taxon>
        <taxon>Bacillaceae</taxon>
        <taxon>Bacillus</taxon>
        <taxon>Bacillus cereus group</taxon>
    </lineage>
</organism>
<protein>
    <recommendedName>
        <fullName evidence="1">UPF0316 protein BA_3420/GBAA_3420/BAS3170</fullName>
    </recommendedName>
</protein>
<accession>Q81MZ9</accession>
<accession>Q6HW61</accession>
<accession>Q6KQB7</accession>
<proteinExistence type="inferred from homology"/>
<feature type="chain" id="PRO_0000171932" description="UPF0316 protein BA_3420/GBAA_3420/BAS3170">
    <location>
        <begin position="1"/>
        <end position="182"/>
    </location>
</feature>
<feature type="transmembrane region" description="Helical" evidence="1">
    <location>
        <begin position="6"/>
        <end position="26"/>
    </location>
</feature>
<feature type="transmembrane region" description="Helical" evidence="1">
    <location>
        <begin position="32"/>
        <end position="52"/>
    </location>
</feature>
<feature type="transmembrane region" description="Helical" evidence="1">
    <location>
        <begin position="58"/>
        <end position="78"/>
    </location>
</feature>
<evidence type="ECO:0000255" key="1">
    <source>
        <dbReference type="HAMAP-Rule" id="MF_01515"/>
    </source>
</evidence>
<keyword id="KW-1003">Cell membrane</keyword>
<keyword id="KW-0472">Membrane</keyword>
<keyword id="KW-1185">Reference proteome</keyword>
<keyword id="KW-0812">Transmembrane</keyword>
<keyword id="KW-1133">Transmembrane helix</keyword>
<name>Y3420_BACAN</name>
<sequence>MLQALLIFVLQIIYVPILTIRTILLVKNQTRSAAAVGLLEGAIYIVSLGIVFQDLSNWMNIVAYVIGFSAGLLLGGYIENKLAIGYITYQVSLLDRCNELVDELRHSGFGVTVFEGEGINSIRYRLDIVAKRSREKELLEIINEIAPKAFMSSYEIRSFKGGYLTKAMKKRALMKKKDHHVS</sequence>
<comment type="subcellular location">
    <subcellularLocation>
        <location evidence="1">Cell membrane</location>
        <topology evidence="1">Multi-pass membrane protein</topology>
    </subcellularLocation>
</comment>
<comment type="similarity">
    <text evidence="1">Belongs to the UPF0316 family.</text>
</comment>
<dbReference type="EMBL" id="AE016879">
    <property type="protein sequence ID" value="AAP27190.1"/>
    <property type="molecule type" value="Genomic_DNA"/>
</dbReference>
<dbReference type="EMBL" id="AE017334">
    <property type="protein sequence ID" value="AAT32529.1"/>
    <property type="molecule type" value="Genomic_DNA"/>
</dbReference>
<dbReference type="EMBL" id="AE017225">
    <property type="protein sequence ID" value="AAT55478.1"/>
    <property type="molecule type" value="Genomic_DNA"/>
</dbReference>
<dbReference type="RefSeq" id="NP_845704.1">
    <property type="nucleotide sequence ID" value="NC_003997.3"/>
</dbReference>
<dbReference type="RefSeq" id="WP_000938435.1">
    <property type="nucleotide sequence ID" value="NZ_WXXJ01000020.1"/>
</dbReference>
<dbReference type="RefSeq" id="YP_029427.1">
    <property type="nucleotide sequence ID" value="NC_005945.1"/>
</dbReference>
<dbReference type="SMR" id="Q81MZ9"/>
<dbReference type="STRING" id="261594.GBAA_3420"/>
<dbReference type="DNASU" id="1085537"/>
<dbReference type="GeneID" id="45023171"/>
<dbReference type="KEGG" id="ban:BA_3420"/>
<dbReference type="KEGG" id="bar:GBAA_3420"/>
<dbReference type="KEGG" id="bat:BAS3170"/>
<dbReference type="PATRIC" id="fig|198094.11.peg.3395"/>
<dbReference type="eggNOG" id="COG4843">
    <property type="taxonomic scope" value="Bacteria"/>
</dbReference>
<dbReference type="HOGENOM" id="CLU_106166_1_1_9"/>
<dbReference type="OMA" id="RTIMMVK"/>
<dbReference type="OrthoDB" id="48231at2"/>
<dbReference type="Proteomes" id="UP000000427">
    <property type="component" value="Chromosome"/>
</dbReference>
<dbReference type="Proteomes" id="UP000000594">
    <property type="component" value="Chromosome"/>
</dbReference>
<dbReference type="GO" id="GO:0005886">
    <property type="term" value="C:plasma membrane"/>
    <property type="evidence" value="ECO:0007669"/>
    <property type="project" value="UniProtKB-SubCell"/>
</dbReference>
<dbReference type="CDD" id="cd16381">
    <property type="entry name" value="YitT_C_like_1"/>
    <property type="match status" value="1"/>
</dbReference>
<dbReference type="HAMAP" id="MF_01515">
    <property type="entry name" value="UPF0316"/>
    <property type="match status" value="1"/>
</dbReference>
<dbReference type="InterPro" id="IPR019264">
    <property type="entry name" value="DUF2179"/>
</dbReference>
<dbReference type="InterPro" id="IPR044035">
    <property type="entry name" value="DUF5698"/>
</dbReference>
<dbReference type="InterPro" id="IPR022930">
    <property type="entry name" value="UPF0316"/>
</dbReference>
<dbReference type="NCBIfam" id="NF003193">
    <property type="entry name" value="PRK04164.1-4"/>
    <property type="match status" value="1"/>
</dbReference>
<dbReference type="NCBIfam" id="NF003194">
    <property type="entry name" value="PRK04164.1-5"/>
    <property type="match status" value="1"/>
</dbReference>
<dbReference type="PANTHER" id="PTHR40060">
    <property type="entry name" value="UPF0316 PROTEIN YEBE"/>
    <property type="match status" value="1"/>
</dbReference>
<dbReference type="PANTHER" id="PTHR40060:SF1">
    <property type="entry name" value="UPF0316 PROTEIN YEBE"/>
    <property type="match status" value="1"/>
</dbReference>
<dbReference type="Pfam" id="PF10035">
    <property type="entry name" value="DUF2179"/>
    <property type="match status" value="1"/>
</dbReference>
<dbReference type="Pfam" id="PF18955">
    <property type="entry name" value="DUF5698"/>
    <property type="match status" value="1"/>
</dbReference>
<reference key="1">
    <citation type="journal article" date="2003" name="Nature">
        <title>The genome sequence of Bacillus anthracis Ames and comparison to closely related bacteria.</title>
        <authorList>
            <person name="Read T.D."/>
            <person name="Peterson S.N."/>
            <person name="Tourasse N.J."/>
            <person name="Baillie L.W."/>
            <person name="Paulsen I.T."/>
            <person name="Nelson K.E."/>
            <person name="Tettelin H."/>
            <person name="Fouts D.E."/>
            <person name="Eisen J.A."/>
            <person name="Gill S.R."/>
            <person name="Holtzapple E.K."/>
            <person name="Okstad O.A."/>
            <person name="Helgason E."/>
            <person name="Rilstone J."/>
            <person name="Wu M."/>
            <person name="Kolonay J.F."/>
            <person name="Beanan M.J."/>
            <person name="Dodson R.J."/>
            <person name="Brinkac L.M."/>
            <person name="Gwinn M.L."/>
            <person name="DeBoy R.T."/>
            <person name="Madpu R."/>
            <person name="Daugherty S.C."/>
            <person name="Durkin A.S."/>
            <person name="Haft D.H."/>
            <person name="Nelson W.C."/>
            <person name="Peterson J.D."/>
            <person name="Pop M."/>
            <person name="Khouri H.M."/>
            <person name="Radune D."/>
            <person name="Benton J.L."/>
            <person name="Mahamoud Y."/>
            <person name="Jiang L."/>
            <person name="Hance I.R."/>
            <person name="Weidman J.F."/>
            <person name="Berry K.J."/>
            <person name="Plaut R.D."/>
            <person name="Wolf A.M."/>
            <person name="Watkins K.L."/>
            <person name="Nierman W.C."/>
            <person name="Hazen A."/>
            <person name="Cline R.T."/>
            <person name="Redmond C."/>
            <person name="Thwaite J.E."/>
            <person name="White O."/>
            <person name="Salzberg S.L."/>
            <person name="Thomason B."/>
            <person name="Friedlander A.M."/>
            <person name="Koehler T.M."/>
            <person name="Hanna P.C."/>
            <person name="Kolstoe A.-B."/>
            <person name="Fraser C.M."/>
        </authorList>
    </citation>
    <scope>NUCLEOTIDE SEQUENCE [LARGE SCALE GENOMIC DNA]</scope>
    <source>
        <strain>Ames / isolate Porton</strain>
    </source>
</reference>
<reference key="2">
    <citation type="journal article" date="2009" name="J. Bacteriol.">
        <title>The complete genome sequence of Bacillus anthracis Ames 'Ancestor'.</title>
        <authorList>
            <person name="Ravel J."/>
            <person name="Jiang L."/>
            <person name="Stanley S.T."/>
            <person name="Wilson M.R."/>
            <person name="Decker R.S."/>
            <person name="Read T.D."/>
            <person name="Worsham P."/>
            <person name="Keim P.S."/>
            <person name="Salzberg S.L."/>
            <person name="Fraser-Liggett C.M."/>
            <person name="Rasko D.A."/>
        </authorList>
    </citation>
    <scope>NUCLEOTIDE SEQUENCE [LARGE SCALE GENOMIC DNA]</scope>
    <source>
        <strain>Ames ancestor</strain>
    </source>
</reference>
<reference key="3">
    <citation type="submission" date="2004-01" db="EMBL/GenBank/DDBJ databases">
        <title>Complete genome sequence of Bacillus anthracis Sterne.</title>
        <authorList>
            <person name="Brettin T.S."/>
            <person name="Bruce D."/>
            <person name="Challacombe J.F."/>
            <person name="Gilna P."/>
            <person name="Han C."/>
            <person name="Hill K."/>
            <person name="Hitchcock P."/>
            <person name="Jackson P."/>
            <person name="Keim P."/>
            <person name="Longmire J."/>
            <person name="Lucas S."/>
            <person name="Okinaka R."/>
            <person name="Richardson P."/>
            <person name="Rubin E."/>
            <person name="Tice H."/>
        </authorList>
    </citation>
    <scope>NUCLEOTIDE SEQUENCE [LARGE SCALE GENOMIC DNA]</scope>
    <source>
        <strain>Sterne</strain>
    </source>
</reference>